<organism>
    <name type="scientific">Cavia porcellus</name>
    <name type="common">Guinea pig</name>
    <dbReference type="NCBI Taxonomy" id="10141"/>
    <lineage>
        <taxon>Eukaryota</taxon>
        <taxon>Metazoa</taxon>
        <taxon>Chordata</taxon>
        <taxon>Craniata</taxon>
        <taxon>Vertebrata</taxon>
        <taxon>Euteleostomi</taxon>
        <taxon>Mammalia</taxon>
        <taxon>Eutheria</taxon>
        <taxon>Euarchontoglires</taxon>
        <taxon>Glires</taxon>
        <taxon>Rodentia</taxon>
        <taxon>Hystricomorpha</taxon>
        <taxon>Caviidae</taxon>
        <taxon>Cavia</taxon>
    </lineage>
</organism>
<protein>
    <recommendedName>
        <fullName>Cytochrome P450 11B1, mitochondrial</fullName>
    </recommendedName>
    <alternativeName>
        <fullName>Aldosterone synthase</fullName>
    </alternativeName>
    <alternativeName>
        <fullName>CYPXIB1</fullName>
    </alternativeName>
    <alternativeName>
        <fullName>Cytochrome P450C11</fullName>
    </alternativeName>
    <alternativeName>
        <fullName evidence="3">Steroid 11-beta-hydroxylase, CYP11B1</fullName>
        <ecNumber evidence="3">1.14.15.4</ecNumber>
    </alternativeName>
</protein>
<gene>
    <name type="primary">CYP11B1</name>
</gene>
<sequence length="500" mass="57820">MAFRLKSDVRLAGSWLCLRGARALGTRAVTASKASVLPFEVIPQHQGNKRQRVLQFWKEQNHDDLHLEMHQTFQELGPIFRCDVGSTRIVAVMLPEDCARLHQAESPYPHRMHLEPWMAYREHRRQNLGVFLLNGPEWLSNRRWLNPNVLSPKAVQNLLPMVDTVARDFSEALKQKVLQSAQGSLTMDMQPDIHKYTVEVSNFALFGERLGLFGCNPSSQSLKFIHALEAVFKTTTQLMFLPRSLSRWMRSQAWKEHFEAWDYISEYAENRIQKKYEELARGCSQYNSIVANLMLQGNLPLRAMKANIMDLVAGSVDTTALPLMMTLFELARNPTVQQALRQESMATEPNIYENPQRLRMELPLLWAAIKETLRMYPVGLFLERFLTSPLVLQNYHIPAGTLVHLNLYSMGRNPEVFLSPEHYNPQRWLENKETYKHLAFGFGVRQCIGRRLAEVEMLLFLHHVLKSFCVETAFQEDVKFAYRFVMMPTSAPLLTFRPVS</sequence>
<comment type="function">
    <text evidence="2 3">A cytochrome P450 monooxygenase involved in the biosynthesis of adrenal corticoids (By similarity). Catalyzes a variety of reactions that are essential for many species, including detoxification, defense, and the formation of endogenous chemicals like steroid hormones (By similarity). Steroid 11beta, 18- and 19-hydroxylase with preferred regioselectivity at 11beta, then 18, and lastly 19. Catalyzes the hydroxylation of 11-deoxycortisol and 11-deoxycorticosterone (21-hydroxyprogesterone) at 11beta position, yielding cortisol or corticosterone, respectively, but cannot produce aldosterone (By similarity). Mechanistically, uses molecular oxygen inserting one oxygen atom into a substrate for hydroxylation and reducing the second into a water molecule. Two electrons are provided by NADPH via a two-protein mitochondrial transfer system comprising flavoprotein FDXR (adrenodoxin/ferredoxin reductase) and nonheme iron-sulfur protein FDX1 or FDX2 (adrenodoxin/ferredoxin). Due to its lack of 18-oxidation activity, it is incapable of generating aldosterone. Could also be involved in the androgen metabolic pathway (By similarity).</text>
</comment>
<comment type="catalytic activity">
    <reaction evidence="3">
        <text>a steroid + 2 reduced [adrenodoxin] + O2 + 2 H(+) = an 11beta-hydroxysteroid + 2 oxidized [adrenodoxin] + H2O</text>
        <dbReference type="Rhea" id="RHEA:15629"/>
        <dbReference type="Rhea" id="RHEA-COMP:9998"/>
        <dbReference type="Rhea" id="RHEA-COMP:9999"/>
        <dbReference type="ChEBI" id="CHEBI:15377"/>
        <dbReference type="ChEBI" id="CHEBI:15378"/>
        <dbReference type="ChEBI" id="CHEBI:15379"/>
        <dbReference type="ChEBI" id="CHEBI:33737"/>
        <dbReference type="ChEBI" id="CHEBI:33738"/>
        <dbReference type="ChEBI" id="CHEBI:35341"/>
        <dbReference type="ChEBI" id="CHEBI:35346"/>
        <dbReference type="EC" id="1.14.15.4"/>
    </reaction>
    <physiologicalReaction direction="left-to-right" evidence="3">
        <dbReference type="Rhea" id="RHEA:15630"/>
    </physiologicalReaction>
</comment>
<comment type="catalytic activity">
    <reaction evidence="3">
        <text>11-deoxycortisol + 2 reduced [adrenodoxin] + O2 + 2 H(+) = cortisol + 2 oxidized [adrenodoxin] + H2O</text>
        <dbReference type="Rhea" id="RHEA:46100"/>
        <dbReference type="Rhea" id="RHEA-COMP:9998"/>
        <dbReference type="Rhea" id="RHEA-COMP:9999"/>
        <dbReference type="ChEBI" id="CHEBI:15377"/>
        <dbReference type="ChEBI" id="CHEBI:15378"/>
        <dbReference type="ChEBI" id="CHEBI:15379"/>
        <dbReference type="ChEBI" id="CHEBI:17650"/>
        <dbReference type="ChEBI" id="CHEBI:28324"/>
        <dbReference type="ChEBI" id="CHEBI:33737"/>
        <dbReference type="ChEBI" id="CHEBI:33738"/>
    </reaction>
    <physiologicalReaction direction="left-to-right" evidence="3">
        <dbReference type="Rhea" id="RHEA:46101"/>
    </physiologicalReaction>
</comment>
<comment type="catalytic activity">
    <reaction evidence="3">
        <text>21-hydroxyprogesterone + 2 reduced [adrenodoxin] + O2 + 2 H(+) = corticosterone + 2 oxidized [adrenodoxin] + H2O</text>
        <dbReference type="Rhea" id="RHEA:46104"/>
        <dbReference type="Rhea" id="RHEA-COMP:9998"/>
        <dbReference type="Rhea" id="RHEA-COMP:9999"/>
        <dbReference type="ChEBI" id="CHEBI:15377"/>
        <dbReference type="ChEBI" id="CHEBI:15378"/>
        <dbReference type="ChEBI" id="CHEBI:15379"/>
        <dbReference type="ChEBI" id="CHEBI:16827"/>
        <dbReference type="ChEBI" id="CHEBI:16973"/>
        <dbReference type="ChEBI" id="CHEBI:33737"/>
        <dbReference type="ChEBI" id="CHEBI:33738"/>
    </reaction>
    <physiologicalReaction direction="left-to-right" evidence="3">
        <dbReference type="Rhea" id="RHEA:46105"/>
    </physiologicalReaction>
</comment>
<comment type="catalytic activity">
    <reaction evidence="2">
        <text>21-hydroxyprogesterone + 2 reduced [adrenodoxin] + O2 + 2 H(+) = 18-hydroxy-11-deoxycorticosterone + 2 oxidized [adrenodoxin] + H2O</text>
        <dbReference type="Rhea" id="RHEA:76151"/>
        <dbReference type="Rhea" id="RHEA-COMP:9998"/>
        <dbReference type="Rhea" id="RHEA-COMP:9999"/>
        <dbReference type="ChEBI" id="CHEBI:15377"/>
        <dbReference type="ChEBI" id="CHEBI:15378"/>
        <dbReference type="ChEBI" id="CHEBI:15379"/>
        <dbReference type="ChEBI" id="CHEBI:16973"/>
        <dbReference type="ChEBI" id="CHEBI:33737"/>
        <dbReference type="ChEBI" id="CHEBI:33738"/>
        <dbReference type="ChEBI" id="CHEBI:195166"/>
    </reaction>
    <physiologicalReaction direction="left-to-right" evidence="2">
        <dbReference type="Rhea" id="RHEA:76152"/>
    </physiologicalReaction>
</comment>
<comment type="catalytic activity">
    <reaction evidence="2">
        <text>21-hydroxyprogesterone + 2 reduced [adrenodoxin] + O2 + 2 H(+) = 19-hydroxy-11-deoxycorticosterone + 2 oxidized [adrenodoxin] + H2O</text>
        <dbReference type="Rhea" id="RHEA:76155"/>
        <dbReference type="Rhea" id="RHEA-COMP:9998"/>
        <dbReference type="Rhea" id="RHEA-COMP:9999"/>
        <dbReference type="ChEBI" id="CHEBI:15377"/>
        <dbReference type="ChEBI" id="CHEBI:15378"/>
        <dbReference type="ChEBI" id="CHEBI:15379"/>
        <dbReference type="ChEBI" id="CHEBI:16973"/>
        <dbReference type="ChEBI" id="CHEBI:33737"/>
        <dbReference type="ChEBI" id="CHEBI:33738"/>
        <dbReference type="ChEBI" id="CHEBI:195167"/>
    </reaction>
    <physiologicalReaction direction="left-to-right" evidence="2">
        <dbReference type="Rhea" id="RHEA:76156"/>
    </physiologicalReaction>
</comment>
<comment type="catalytic activity">
    <reaction evidence="2">
        <text>cortisol + 2 reduced [adrenodoxin] + O2 + 2 H(+) = 18-hydroxycortisol + 2 oxidized [adrenodoxin] + H2O</text>
        <dbReference type="Rhea" id="RHEA:76019"/>
        <dbReference type="Rhea" id="RHEA-COMP:9998"/>
        <dbReference type="Rhea" id="RHEA-COMP:9999"/>
        <dbReference type="ChEBI" id="CHEBI:15377"/>
        <dbReference type="ChEBI" id="CHEBI:15378"/>
        <dbReference type="ChEBI" id="CHEBI:15379"/>
        <dbReference type="ChEBI" id="CHEBI:17650"/>
        <dbReference type="ChEBI" id="CHEBI:33737"/>
        <dbReference type="ChEBI" id="CHEBI:33738"/>
        <dbReference type="ChEBI" id="CHEBI:89455"/>
    </reaction>
    <physiologicalReaction direction="left-to-right" evidence="2">
        <dbReference type="Rhea" id="RHEA:76020"/>
    </physiologicalReaction>
</comment>
<comment type="catalytic activity">
    <reaction evidence="2">
        <text>11-deoxycortisol + 2 reduced [adrenodoxin] + O2 + 2 H(+) = 18-hydroxy-11-deoxycortisol + 2 oxidized [adrenodoxin] + H2O</text>
        <dbReference type="Rhea" id="RHEA:76163"/>
        <dbReference type="Rhea" id="RHEA-COMP:9998"/>
        <dbReference type="Rhea" id="RHEA-COMP:9999"/>
        <dbReference type="ChEBI" id="CHEBI:15377"/>
        <dbReference type="ChEBI" id="CHEBI:15378"/>
        <dbReference type="ChEBI" id="CHEBI:15379"/>
        <dbReference type="ChEBI" id="CHEBI:28324"/>
        <dbReference type="ChEBI" id="CHEBI:33737"/>
        <dbReference type="ChEBI" id="CHEBI:33738"/>
        <dbReference type="ChEBI" id="CHEBI:195179"/>
    </reaction>
    <physiologicalReaction direction="left-to-right" evidence="2">
        <dbReference type="Rhea" id="RHEA:76164"/>
    </physiologicalReaction>
</comment>
<comment type="cofactor">
    <cofactor evidence="4">
        <name>heme</name>
        <dbReference type="ChEBI" id="CHEBI:30413"/>
    </cofactor>
</comment>
<comment type="pathway">
    <text evidence="3">Steroid biosynthesis; glucocorticoid biosynthesis.</text>
</comment>
<comment type="pathway">
    <text evidence="3">Steroid hormone biosynthesis.</text>
</comment>
<comment type="subcellular location">
    <subcellularLocation>
        <location evidence="1">Mitochondrion inner membrane</location>
        <topology evidence="1">Peripheral membrane protein</topology>
    </subcellularLocation>
</comment>
<comment type="similarity">
    <text evidence="5">Belongs to the cytochrome P450 family.</text>
</comment>
<reference key="1">
    <citation type="journal article" date="1996" name="Biochem. Biophys. Res. Commun.">
        <title>Molecular cloning and functional expression of the cytochrome P450 11B-hydroxylase of the guinea pig.</title>
        <authorList>
            <person name="Buelow H.E."/>
            <person name="Mobius K."/>
            <person name="Bahr V."/>
            <person name="Bernhardt R."/>
        </authorList>
    </citation>
    <scope>NUCLEOTIDE SEQUENCE [MRNA]</scope>
    <source>
        <strain>Dunkin-Hartley</strain>
        <tissue>Adrenal gland</tissue>
    </source>
</reference>
<proteinExistence type="evidence at transcript level"/>
<name>C11B1_CAVPO</name>
<keyword id="KW-0349">Heme</keyword>
<keyword id="KW-0408">Iron</keyword>
<keyword id="KW-0443">Lipid metabolism</keyword>
<keyword id="KW-0472">Membrane</keyword>
<keyword id="KW-0479">Metal-binding</keyword>
<keyword id="KW-0496">Mitochondrion</keyword>
<keyword id="KW-0999">Mitochondrion inner membrane</keyword>
<keyword id="KW-0503">Monooxygenase</keyword>
<keyword id="KW-0560">Oxidoreductase</keyword>
<keyword id="KW-1185">Reference proteome</keyword>
<keyword id="KW-0753">Steroid metabolism</keyword>
<keyword id="KW-0755">Steroidogenesis</keyword>
<keyword id="KW-0809">Transit peptide</keyword>
<accession>Q64408</accession>
<evidence type="ECO:0000250" key="1">
    <source>
        <dbReference type="UniProtKB" id="P14137"/>
    </source>
</evidence>
<evidence type="ECO:0000250" key="2">
    <source>
        <dbReference type="UniProtKB" id="P15393"/>
    </source>
</evidence>
<evidence type="ECO:0000250" key="3">
    <source>
        <dbReference type="UniProtKB" id="P15538"/>
    </source>
</evidence>
<evidence type="ECO:0000250" key="4">
    <source>
        <dbReference type="UniProtKB" id="P19099"/>
    </source>
</evidence>
<evidence type="ECO:0000305" key="5"/>
<dbReference type="EC" id="1.14.15.4" evidence="3"/>
<dbReference type="EMBL" id="Z69785">
    <property type="protein sequence ID" value="CAA93633.1"/>
    <property type="molecule type" value="mRNA"/>
</dbReference>
<dbReference type="PIR" id="JC4709">
    <property type="entry name" value="JC4709"/>
</dbReference>
<dbReference type="RefSeq" id="NP_001166410.1">
    <property type="nucleotide sequence ID" value="NM_001172939.1"/>
</dbReference>
<dbReference type="SMR" id="Q64408"/>
<dbReference type="FunCoup" id="Q64408">
    <property type="interactions" value="442"/>
</dbReference>
<dbReference type="STRING" id="10141.ENSCPOP00000012206"/>
<dbReference type="GeneID" id="111755182"/>
<dbReference type="CTD" id="1584"/>
<dbReference type="eggNOG" id="KOG0159">
    <property type="taxonomic scope" value="Eukaryota"/>
</dbReference>
<dbReference type="HOGENOM" id="CLU_001570_28_4_1"/>
<dbReference type="InParanoid" id="Q64408"/>
<dbReference type="OrthoDB" id="3945418at2759"/>
<dbReference type="UniPathway" id="UPA00788"/>
<dbReference type="Proteomes" id="UP000005447">
    <property type="component" value="Unassembled WGS sequence"/>
</dbReference>
<dbReference type="GO" id="GO:0005743">
    <property type="term" value="C:mitochondrial inner membrane"/>
    <property type="evidence" value="ECO:0007669"/>
    <property type="project" value="UniProtKB-SubCell"/>
</dbReference>
<dbReference type="GO" id="GO:0047783">
    <property type="term" value="F:corticosterone 18-monooxygenase activity"/>
    <property type="evidence" value="ECO:0007669"/>
    <property type="project" value="TreeGrafter"/>
</dbReference>
<dbReference type="GO" id="GO:0020037">
    <property type="term" value="F:heme binding"/>
    <property type="evidence" value="ECO:0007669"/>
    <property type="project" value="InterPro"/>
</dbReference>
<dbReference type="GO" id="GO:0005506">
    <property type="term" value="F:iron ion binding"/>
    <property type="evidence" value="ECO:0007669"/>
    <property type="project" value="InterPro"/>
</dbReference>
<dbReference type="GO" id="GO:0004507">
    <property type="term" value="F:steroid 11-beta-monooxygenase activity"/>
    <property type="evidence" value="ECO:0007669"/>
    <property type="project" value="UniProtKB-EC"/>
</dbReference>
<dbReference type="GO" id="GO:0032342">
    <property type="term" value="P:aldosterone biosynthetic process"/>
    <property type="evidence" value="ECO:0007669"/>
    <property type="project" value="TreeGrafter"/>
</dbReference>
<dbReference type="GO" id="GO:0071375">
    <property type="term" value="P:cellular response to peptide hormone stimulus"/>
    <property type="evidence" value="ECO:0007669"/>
    <property type="project" value="TreeGrafter"/>
</dbReference>
<dbReference type="GO" id="GO:0008203">
    <property type="term" value="P:cholesterol metabolic process"/>
    <property type="evidence" value="ECO:0007669"/>
    <property type="project" value="TreeGrafter"/>
</dbReference>
<dbReference type="GO" id="GO:0034650">
    <property type="term" value="P:cortisol metabolic process"/>
    <property type="evidence" value="ECO:0007669"/>
    <property type="project" value="TreeGrafter"/>
</dbReference>
<dbReference type="GO" id="GO:0006704">
    <property type="term" value="P:glucocorticoid biosynthetic process"/>
    <property type="evidence" value="ECO:0007669"/>
    <property type="project" value="UniProtKB-UniPathway"/>
</dbReference>
<dbReference type="Gene3D" id="1.10.630.10">
    <property type="entry name" value="Cytochrome P450"/>
    <property type="match status" value="1"/>
</dbReference>
<dbReference type="InterPro" id="IPR050479">
    <property type="entry name" value="CYP11_CYP27_families"/>
</dbReference>
<dbReference type="InterPro" id="IPR001128">
    <property type="entry name" value="Cyt_P450"/>
</dbReference>
<dbReference type="InterPro" id="IPR017972">
    <property type="entry name" value="Cyt_P450_CS"/>
</dbReference>
<dbReference type="InterPro" id="IPR002401">
    <property type="entry name" value="Cyt_P450_E_grp-I"/>
</dbReference>
<dbReference type="InterPro" id="IPR036396">
    <property type="entry name" value="Cyt_P450_sf"/>
</dbReference>
<dbReference type="PANTHER" id="PTHR24279">
    <property type="entry name" value="CYTOCHROME P450"/>
    <property type="match status" value="1"/>
</dbReference>
<dbReference type="PANTHER" id="PTHR24279:SF1">
    <property type="entry name" value="CYTOCHROME P450 11B2, MITOCHONDRIAL"/>
    <property type="match status" value="1"/>
</dbReference>
<dbReference type="Pfam" id="PF00067">
    <property type="entry name" value="p450"/>
    <property type="match status" value="1"/>
</dbReference>
<dbReference type="PRINTS" id="PR00463">
    <property type="entry name" value="EP450I"/>
</dbReference>
<dbReference type="PRINTS" id="PR00385">
    <property type="entry name" value="P450"/>
</dbReference>
<dbReference type="SUPFAM" id="SSF48264">
    <property type="entry name" value="Cytochrome P450"/>
    <property type="match status" value="1"/>
</dbReference>
<dbReference type="PROSITE" id="PS00086">
    <property type="entry name" value="CYTOCHROME_P450"/>
    <property type="match status" value="1"/>
</dbReference>
<feature type="transit peptide" description="Mitochondrion">
    <location>
        <begin position="1"/>
        <end position="24"/>
    </location>
</feature>
<feature type="chain" id="PRO_0000003595" description="Cytochrome P450 11B1, mitochondrial">
    <location>
        <begin position="25"/>
        <end position="500"/>
    </location>
</feature>
<feature type="binding site" description="axial binding residue" evidence="4">
    <location>
        <position position="447"/>
    </location>
    <ligand>
        <name>heme</name>
        <dbReference type="ChEBI" id="CHEBI:30413"/>
    </ligand>
    <ligandPart>
        <name>Fe</name>
        <dbReference type="ChEBI" id="CHEBI:18248"/>
    </ligandPart>
</feature>